<evidence type="ECO:0000255" key="1">
    <source>
        <dbReference type="HAMAP-Rule" id="MF_00563"/>
    </source>
</evidence>
<feature type="chain" id="PRO_1000024715" description="Adenosylhomocysteinase">
    <location>
        <begin position="1"/>
        <end position="473"/>
    </location>
</feature>
<feature type="binding site" evidence="1">
    <location>
        <position position="64"/>
    </location>
    <ligand>
        <name>substrate</name>
    </ligand>
</feature>
<feature type="binding site" evidence="1">
    <location>
        <position position="139"/>
    </location>
    <ligand>
        <name>substrate</name>
    </ligand>
</feature>
<feature type="binding site" evidence="1">
    <location>
        <position position="199"/>
    </location>
    <ligand>
        <name>substrate</name>
    </ligand>
</feature>
<feature type="binding site" evidence="1">
    <location>
        <begin position="200"/>
        <end position="202"/>
    </location>
    <ligand>
        <name>NAD(+)</name>
        <dbReference type="ChEBI" id="CHEBI:57540"/>
    </ligand>
</feature>
<feature type="binding site" evidence="1">
    <location>
        <position position="229"/>
    </location>
    <ligand>
        <name>substrate</name>
    </ligand>
</feature>
<feature type="binding site" evidence="1">
    <location>
        <position position="233"/>
    </location>
    <ligand>
        <name>substrate</name>
    </ligand>
</feature>
<feature type="binding site" evidence="1">
    <location>
        <position position="234"/>
    </location>
    <ligand>
        <name>NAD(+)</name>
        <dbReference type="ChEBI" id="CHEBI:57540"/>
    </ligand>
</feature>
<feature type="binding site" evidence="1">
    <location>
        <begin position="263"/>
        <end position="268"/>
    </location>
    <ligand>
        <name>NAD(+)</name>
        <dbReference type="ChEBI" id="CHEBI:57540"/>
    </ligand>
</feature>
<feature type="binding site" evidence="1">
    <location>
        <position position="286"/>
    </location>
    <ligand>
        <name>NAD(+)</name>
        <dbReference type="ChEBI" id="CHEBI:57540"/>
    </ligand>
</feature>
<feature type="binding site" evidence="1">
    <location>
        <position position="321"/>
    </location>
    <ligand>
        <name>NAD(+)</name>
        <dbReference type="ChEBI" id="CHEBI:57540"/>
    </ligand>
</feature>
<feature type="binding site" evidence="1">
    <location>
        <begin position="342"/>
        <end position="344"/>
    </location>
    <ligand>
        <name>NAD(+)</name>
        <dbReference type="ChEBI" id="CHEBI:57540"/>
    </ligand>
</feature>
<feature type="binding site" evidence="1">
    <location>
        <position position="387"/>
    </location>
    <ligand>
        <name>NAD(+)</name>
        <dbReference type="ChEBI" id="CHEBI:57540"/>
    </ligand>
</feature>
<gene>
    <name evidence="1" type="primary">ahcY</name>
    <name type="ordered locus">BMA10229_A1701</name>
</gene>
<keyword id="KW-0963">Cytoplasm</keyword>
<keyword id="KW-0378">Hydrolase</keyword>
<keyword id="KW-0520">NAD</keyword>
<keyword id="KW-0554">One-carbon metabolism</keyword>
<proteinExistence type="inferred from homology"/>
<organism>
    <name type="scientific">Burkholderia mallei (strain NCTC 10229)</name>
    <dbReference type="NCBI Taxonomy" id="412022"/>
    <lineage>
        <taxon>Bacteria</taxon>
        <taxon>Pseudomonadati</taxon>
        <taxon>Pseudomonadota</taxon>
        <taxon>Betaproteobacteria</taxon>
        <taxon>Burkholderiales</taxon>
        <taxon>Burkholderiaceae</taxon>
        <taxon>Burkholderia</taxon>
        <taxon>pseudomallei group</taxon>
    </lineage>
</organism>
<sequence>MNAAVIDSHSAQDYVVADIALAGWGRKELNIAETEMPGLVQIRDEYKAQQPLKGARIAGSLHMTIQTGVLIETLKALGADVRWASCNIFSTQDHAAAAIVEAGTPVFAFKGESLDEYWEFSHRIFEWPNGEFANMILDDGGDATLLLILGSKAEKDRSVIARPTNEEEVALFKSIERHLEIDGSWYSKRLAHIKGVTEETTTGVHRLYQMEKDGRLPFPAFNVNDSVTKSKFDNLYGCRESLVDGIKRATDVMIAGKIAVVAGYGDVGKGCAQSLRGLGATVWVTEIDPICALQAAMEGYRVVTMEYAADKADIFVTATGNYHVINHDHMKAMRHNAIVCNIGHFDSEIDVASTRQYQWENIKPQVDHIIFPDGKRVILLAEGRLVNLGCATGHPSFVMSNSFTNQTLAQIELFTRGGEYANKVYVLPKHLDEKVARLHLARIGAQLSELSDDQAAYIGVSKAGPFKPDHYRY</sequence>
<comment type="function">
    <text evidence="1">May play a key role in the regulation of the intracellular concentration of adenosylhomocysteine.</text>
</comment>
<comment type="catalytic activity">
    <reaction evidence="1">
        <text>S-adenosyl-L-homocysteine + H2O = L-homocysteine + adenosine</text>
        <dbReference type="Rhea" id="RHEA:21708"/>
        <dbReference type="ChEBI" id="CHEBI:15377"/>
        <dbReference type="ChEBI" id="CHEBI:16335"/>
        <dbReference type="ChEBI" id="CHEBI:57856"/>
        <dbReference type="ChEBI" id="CHEBI:58199"/>
        <dbReference type="EC" id="3.13.2.1"/>
    </reaction>
</comment>
<comment type="cofactor">
    <cofactor evidence="1">
        <name>NAD(+)</name>
        <dbReference type="ChEBI" id="CHEBI:57540"/>
    </cofactor>
    <text evidence="1">Binds 1 NAD(+) per subunit.</text>
</comment>
<comment type="pathway">
    <text evidence="1">Amino-acid biosynthesis; L-homocysteine biosynthesis; L-homocysteine from S-adenosyl-L-homocysteine: step 1/1.</text>
</comment>
<comment type="subcellular location">
    <subcellularLocation>
        <location evidence="1">Cytoplasm</location>
    </subcellularLocation>
</comment>
<comment type="similarity">
    <text evidence="1">Belongs to the adenosylhomocysteinase family.</text>
</comment>
<dbReference type="EC" id="3.13.2.1" evidence="1"/>
<dbReference type="EMBL" id="CP000546">
    <property type="protein sequence ID" value="ABN00640.1"/>
    <property type="molecule type" value="Genomic_DNA"/>
</dbReference>
<dbReference type="RefSeq" id="WP_004198634.1">
    <property type="nucleotide sequence ID" value="NC_008836.1"/>
</dbReference>
<dbReference type="SMR" id="A2S6W2"/>
<dbReference type="GeneID" id="93061911"/>
<dbReference type="KEGG" id="bml:BMA10229_A1701"/>
<dbReference type="HOGENOM" id="CLU_025194_2_1_4"/>
<dbReference type="UniPathway" id="UPA00314">
    <property type="reaction ID" value="UER00076"/>
</dbReference>
<dbReference type="Proteomes" id="UP000002283">
    <property type="component" value="Chromosome I"/>
</dbReference>
<dbReference type="GO" id="GO:0005829">
    <property type="term" value="C:cytosol"/>
    <property type="evidence" value="ECO:0007669"/>
    <property type="project" value="TreeGrafter"/>
</dbReference>
<dbReference type="GO" id="GO:0004013">
    <property type="term" value="F:adenosylhomocysteinase activity"/>
    <property type="evidence" value="ECO:0007669"/>
    <property type="project" value="UniProtKB-UniRule"/>
</dbReference>
<dbReference type="GO" id="GO:0071269">
    <property type="term" value="P:L-homocysteine biosynthetic process"/>
    <property type="evidence" value="ECO:0007669"/>
    <property type="project" value="UniProtKB-UniRule"/>
</dbReference>
<dbReference type="GO" id="GO:0006730">
    <property type="term" value="P:one-carbon metabolic process"/>
    <property type="evidence" value="ECO:0007669"/>
    <property type="project" value="UniProtKB-KW"/>
</dbReference>
<dbReference type="GO" id="GO:0033353">
    <property type="term" value="P:S-adenosylmethionine cycle"/>
    <property type="evidence" value="ECO:0007669"/>
    <property type="project" value="TreeGrafter"/>
</dbReference>
<dbReference type="CDD" id="cd00401">
    <property type="entry name" value="SAHH"/>
    <property type="match status" value="1"/>
</dbReference>
<dbReference type="FunFam" id="3.40.50.720:FF:000004">
    <property type="entry name" value="Adenosylhomocysteinase"/>
    <property type="match status" value="1"/>
</dbReference>
<dbReference type="Gene3D" id="3.40.50.1480">
    <property type="entry name" value="Adenosylhomocysteinase-like"/>
    <property type="match status" value="1"/>
</dbReference>
<dbReference type="Gene3D" id="3.40.50.720">
    <property type="entry name" value="NAD(P)-binding Rossmann-like Domain"/>
    <property type="match status" value="1"/>
</dbReference>
<dbReference type="HAMAP" id="MF_00563">
    <property type="entry name" value="AdoHcyase"/>
    <property type="match status" value="1"/>
</dbReference>
<dbReference type="InterPro" id="IPR042172">
    <property type="entry name" value="Adenosylhomocyst_ase-like_sf"/>
</dbReference>
<dbReference type="InterPro" id="IPR000043">
    <property type="entry name" value="Adenosylhomocysteinase-like"/>
</dbReference>
<dbReference type="InterPro" id="IPR015878">
    <property type="entry name" value="Ado_hCys_hydrolase_NAD-bd"/>
</dbReference>
<dbReference type="InterPro" id="IPR036291">
    <property type="entry name" value="NAD(P)-bd_dom_sf"/>
</dbReference>
<dbReference type="InterPro" id="IPR020082">
    <property type="entry name" value="S-Ado-L-homoCys_hydrolase_CS"/>
</dbReference>
<dbReference type="NCBIfam" id="TIGR00936">
    <property type="entry name" value="ahcY"/>
    <property type="match status" value="1"/>
</dbReference>
<dbReference type="NCBIfam" id="NF004005">
    <property type="entry name" value="PRK05476.2-3"/>
    <property type="match status" value="1"/>
</dbReference>
<dbReference type="PANTHER" id="PTHR23420">
    <property type="entry name" value="ADENOSYLHOMOCYSTEINASE"/>
    <property type="match status" value="1"/>
</dbReference>
<dbReference type="PANTHER" id="PTHR23420:SF0">
    <property type="entry name" value="ADENOSYLHOMOCYSTEINASE"/>
    <property type="match status" value="1"/>
</dbReference>
<dbReference type="Pfam" id="PF05221">
    <property type="entry name" value="AdoHcyase"/>
    <property type="match status" value="1"/>
</dbReference>
<dbReference type="Pfam" id="PF00670">
    <property type="entry name" value="AdoHcyase_NAD"/>
    <property type="match status" value="1"/>
</dbReference>
<dbReference type="PIRSF" id="PIRSF001109">
    <property type="entry name" value="Ad_hcy_hydrolase"/>
    <property type="match status" value="1"/>
</dbReference>
<dbReference type="SMART" id="SM00996">
    <property type="entry name" value="AdoHcyase"/>
    <property type="match status" value="1"/>
</dbReference>
<dbReference type="SMART" id="SM00997">
    <property type="entry name" value="AdoHcyase_NAD"/>
    <property type="match status" value="1"/>
</dbReference>
<dbReference type="SUPFAM" id="SSF52283">
    <property type="entry name" value="Formate/glycerate dehydrogenase catalytic domain-like"/>
    <property type="match status" value="1"/>
</dbReference>
<dbReference type="SUPFAM" id="SSF51735">
    <property type="entry name" value="NAD(P)-binding Rossmann-fold domains"/>
    <property type="match status" value="1"/>
</dbReference>
<dbReference type="PROSITE" id="PS00738">
    <property type="entry name" value="ADOHCYASE_1"/>
    <property type="match status" value="1"/>
</dbReference>
<dbReference type="PROSITE" id="PS00739">
    <property type="entry name" value="ADOHCYASE_2"/>
    <property type="match status" value="1"/>
</dbReference>
<protein>
    <recommendedName>
        <fullName evidence="1">Adenosylhomocysteinase</fullName>
        <ecNumber evidence="1">3.13.2.1</ecNumber>
    </recommendedName>
    <alternativeName>
        <fullName evidence="1">S-adenosyl-L-homocysteine hydrolase</fullName>
        <shortName evidence="1">AdoHcyase</shortName>
    </alternativeName>
</protein>
<accession>A2S6W2</accession>
<reference key="1">
    <citation type="journal article" date="2010" name="Genome Biol. Evol.">
        <title>Continuing evolution of Burkholderia mallei through genome reduction and large-scale rearrangements.</title>
        <authorList>
            <person name="Losada L."/>
            <person name="Ronning C.M."/>
            <person name="DeShazer D."/>
            <person name="Woods D."/>
            <person name="Fedorova N."/>
            <person name="Kim H.S."/>
            <person name="Shabalina S.A."/>
            <person name="Pearson T.R."/>
            <person name="Brinkac L."/>
            <person name="Tan P."/>
            <person name="Nandi T."/>
            <person name="Crabtree J."/>
            <person name="Badger J."/>
            <person name="Beckstrom-Sternberg S."/>
            <person name="Saqib M."/>
            <person name="Schutzer S.E."/>
            <person name="Keim P."/>
            <person name="Nierman W.C."/>
        </authorList>
    </citation>
    <scope>NUCLEOTIDE SEQUENCE [LARGE SCALE GENOMIC DNA]</scope>
    <source>
        <strain>NCTC 10229</strain>
    </source>
</reference>
<name>SAHH_BURM9</name>